<protein>
    <recommendedName>
        <fullName>Synaptosomal-associated protein 25</fullName>
        <shortName>SNAP-25</shortName>
    </recommendedName>
    <alternativeName>
        <fullName>Synaptosomal-associated 25 kDa protein</fullName>
    </alternativeName>
</protein>
<reference key="1">
    <citation type="submission" date="2006-06" db="EMBL/GenBank/DDBJ databases">
        <authorList>
            <consortium name="NIH - Mammalian Gene Collection (MGC) project"/>
        </authorList>
    </citation>
    <scope>NUCLEOTIDE SEQUENCE [LARGE SCALE MRNA]</scope>
    <source>
        <strain>Hereford</strain>
        <tissue>Basal ganglia</tissue>
    </source>
</reference>
<reference key="2">
    <citation type="journal article" date="1996" name="Biochemistry">
        <title>Botulinum neurotoxin C1 cleaves both syntaxin and SNAP-25 in intact and permeabilized chromaffin cells: correlation with its blockade of catecholamine release.</title>
        <authorList>
            <person name="Foran P."/>
            <person name="Lawrence G.W."/>
            <person name="Shone C.C."/>
            <person name="Foster K.A."/>
            <person name="Dolly J.O."/>
        </authorList>
    </citation>
    <scope>PROTEOLYTIC CLEAVAGE (MICROBIAL INFECTION) BY C.BOTULINUM NEUROTOXIN TYPE C</scope>
    <source>
        <tissue>Chromaffin cell</tissue>
    </source>
</reference>
<reference key="3">
    <citation type="journal article" date="2010" name="Mol. Psychiatry">
        <title>The dysbindin-containing complex (BLOC-1) in brain: developmental regulation, interaction with SNARE proteins and role in neurite outgrowth.</title>
        <authorList>
            <person name="Ghiani C.A."/>
            <person name="Starcevic M."/>
            <person name="Rodriguez-Fernandez I.A."/>
            <person name="Nazarian R."/>
            <person name="Cheli V.T."/>
            <person name="Chan L.N."/>
            <person name="Malvar J.S."/>
            <person name="de Vellis J."/>
            <person name="Sabatti C."/>
            <person name="Dell'Angelica E.C."/>
        </authorList>
    </citation>
    <scope>ASSOCIATION WITH THE BLOC-1 COMPLEX</scope>
    <scope>INTERACTION WITH BLOC1S6</scope>
</reference>
<evidence type="ECO:0000250" key="1"/>
<evidence type="ECO:0000250" key="2">
    <source>
        <dbReference type="UniProtKB" id="P60879"/>
    </source>
</evidence>
<evidence type="ECO:0000250" key="3">
    <source>
        <dbReference type="UniProtKB" id="P60880"/>
    </source>
</evidence>
<evidence type="ECO:0000250" key="4">
    <source>
        <dbReference type="UniProtKB" id="P60881"/>
    </source>
</evidence>
<evidence type="ECO:0000255" key="5">
    <source>
        <dbReference type="PROSITE-ProRule" id="PRU00202"/>
    </source>
</evidence>
<evidence type="ECO:0000256" key="6">
    <source>
        <dbReference type="SAM" id="MobiDB-lite"/>
    </source>
</evidence>
<evidence type="ECO:0000269" key="7">
    <source>
    </source>
</evidence>
<evidence type="ECO:0000305" key="8"/>
<evidence type="ECO:0000305" key="9">
    <source>
    </source>
</evidence>
<name>SNP25_BOVIN</name>
<feature type="chain" id="PRO_0000355578" description="Synaptosomal-associated protein 25">
    <location>
        <begin position="1"/>
        <end position="206"/>
    </location>
</feature>
<feature type="domain" description="t-SNARE coiled-coil homology 1" evidence="5">
    <location>
        <begin position="19"/>
        <end position="81"/>
    </location>
</feature>
<feature type="domain" description="t-SNARE coiled-coil homology 2" evidence="5">
    <location>
        <begin position="140"/>
        <end position="202"/>
    </location>
</feature>
<feature type="region of interest" description="Interaction with CENPF" evidence="1">
    <location>
        <begin position="1"/>
        <end position="75"/>
    </location>
</feature>
<feature type="region of interest" description="Disordered" evidence="6">
    <location>
        <begin position="1"/>
        <end position="23"/>
    </location>
</feature>
<feature type="region of interest" description="Interaction with ZDHHC17" evidence="3">
    <location>
        <begin position="111"/>
        <end position="120"/>
    </location>
</feature>
<feature type="compositionally biased region" description="Basic and acidic residues" evidence="6">
    <location>
        <begin position="1"/>
        <end position="20"/>
    </location>
</feature>
<feature type="site" description="(Microbial infection) Cleavage; by C.botulinum neurotoxin type C (BoNT/C)" evidence="9">
    <location>
        <begin position="198"/>
        <end position="199"/>
    </location>
</feature>
<feature type="modified residue" description="Phosphothreonine" evidence="2">
    <location>
        <position position="138"/>
    </location>
</feature>
<feature type="modified residue" description="Phosphoserine" evidence="2">
    <location>
        <position position="154"/>
    </location>
</feature>
<feature type="modified residue" description="Phosphoserine" evidence="2">
    <location>
        <position position="187"/>
    </location>
</feature>
<feature type="lipid moiety-binding region" description="S-palmitoyl cysteine" evidence="2">
    <location>
        <position position="85"/>
    </location>
</feature>
<feature type="lipid moiety-binding region" description="S-palmitoyl cysteine" evidence="2">
    <location>
        <position position="88"/>
    </location>
</feature>
<feature type="lipid moiety-binding region" description="S-palmitoyl cysteine" evidence="2">
    <location>
        <position position="90"/>
    </location>
</feature>
<feature type="lipid moiety-binding region" description="S-palmitoyl cysteine" evidence="2">
    <location>
        <position position="92"/>
    </location>
</feature>
<proteinExistence type="evidence at protein level"/>
<keyword id="KW-1003">Cell membrane</keyword>
<keyword id="KW-0175">Coiled coil</keyword>
<keyword id="KW-0963">Cytoplasm</keyword>
<keyword id="KW-0449">Lipoprotein</keyword>
<keyword id="KW-0472">Membrane</keyword>
<keyword id="KW-0564">Palmitate</keyword>
<keyword id="KW-0597">Phosphoprotein</keyword>
<keyword id="KW-1185">Reference proteome</keyword>
<keyword id="KW-0677">Repeat</keyword>
<keyword id="KW-0770">Synapse</keyword>
<keyword id="KW-0771">Synaptosome</keyword>
<gene>
    <name type="primary">SNAP25</name>
</gene>
<sequence length="206" mass="23315">MAEDADMRNELEEMQRRADQLADESLESTRRMLQLVEESKDAGIRTLVMLDEQGEQLERIEEGMDQINKDMKEAEKNLTDLGKFCGLCVCPCNKLKSSDAYKKAWGNNQDGVVASQPARVVDEREQMAISGGFIRRVTNDARENEMDENLEQVSGIIGNLRHMALDMGNEIDTQNRQIDRIMEKADSNKTRIDEANQRATKMLGSG</sequence>
<accession>Q17QQ3</accession>
<dbReference type="EMBL" id="BC118237">
    <property type="protein sequence ID" value="AAI18238.1"/>
    <property type="molecule type" value="mRNA"/>
</dbReference>
<dbReference type="RefSeq" id="NP_001069714.1">
    <property type="nucleotide sequence ID" value="NM_001076246.1"/>
</dbReference>
<dbReference type="RefSeq" id="XP_059748724.1">
    <property type="nucleotide sequence ID" value="XM_059892741.1"/>
</dbReference>
<dbReference type="RefSeq" id="XP_059748725.1">
    <property type="nucleotide sequence ID" value="XM_059892742.1"/>
</dbReference>
<dbReference type="SMR" id="Q17QQ3"/>
<dbReference type="BioGRID" id="197420">
    <property type="interactions" value="1"/>
</dbReference>
<dbReference type="CORUM" id="Q17QQ3"/>
<dbReference type="FunCoup" id="Q17QQ3">
    <property type="interactions" value="822"/>
</dbReference>
<dbReference type="IntAct" id="Q17QQ3">
    <property type="interactions" value="3"/>
</dbReference>
<dbReference type="MINT" id="Q17QQ3"/>
<dbReference type="STRING" id="9913.ENSBTAP00000010961"/>
<dbReference type="PaxDb" id="9913-ENSBTAP00000010961"/>
<dbReference type="Ensembl" id="ENSBTAT00000010961.4">
    <property type="protein sequence ID" value="ENSBTAP00000010961.3"/>
    <property type="gene ID" value="ENSBTAG00000008323.6"/>
</dbReference>
<dbReference type="GeneID" id="540853"/>
<dbReference type="KEGG" id="bta:540853"/>
<dbReference type="CTD" id="6616"/>
<dbReference type="VEuPathDB" id="HostDB:ENSBTAG00000008323"/>
<dbReference type="VGNC" id="VGNC:35051">
    <property type="gene designation" value="SNAP25"/>
</dbReference>
<dbReference type="eggNOG" id="KOG3065">
    <property type="taxonomic scope" value="Eukaryota"/>
</dbReference>
<dbReference type="GeneTree" id="ENSGT00950000182843"/>
<dbReference type="HOGENOM" id="CLU_096939_0_0_1"/>
<dbReference type="InParanoid" id="Q17QQ3"/>
<dbReference type="OMA" id="GMIQINE"/>
<dbReference type="OrthoDB" id="19261at2759"/>
<dbReference type="TreeFam" id="TF315125"/>
<dbReference type="Reactome" id="R-BTA-181429">
    <property type="pathway name" value="Serotonin Neurotransmitter Release Cycle"/>
</dbReference>
<dbReference type="Reactome" id="R-BTA-181430">
    <property type="pathway name" value="Norepinephrine Neurotransmitter Release Cycle"/>
</dbReference>
<dbReference type="Reactome" id="R-BTA-210500">
    <property type="pathway name" value="Glutamate Neurotransmitter Release Cycle"/>
</dbReference>
<dbReference type="Reactome" id="R-BTA-212676">
    <property type="pathway name" value="Dopamine Neurotransmitter Release Cycle"/>
</dbReference>
<dbReference type="Reactome" id="R-BTA-264642">
    <property type="pathway name" value="Acetylcholine Neurotransmitter Release Cycle"/>
</dbReference>
<dbReference type="Reactome" id="R-BTA-449836">
    <property type="pathway name" value="Other interleukin signaling"/>
</dbReference>
<dbReference type="Reactome" id="R-BTA-6798695">
    <property type="pathway name" value="Neutrophil degranulation"/>
</dbReference>
<dbReference type="Reactome" id="R-BTA-888590">
    <property type="pathway name" value="GABA synthesis, release, reuptake and degradation"/>
</dbReference>
<dbReference type="Proteomes" id="UP000009136">
    <property type="component" value="Chromosome 13"/>
</dbReference>
<dbReference type="Bgee" id="ENSBTAG00000008323">
    <property type="expression patterns" value="Expressed in occipital lobe and 94 other cell types or tissues"/>
</dbReference>
<dbReference type="GO" id="GO:0005737">
    <property type="term" value="C:cytoplasm"/>
    <property type="evidence" value="ECO:0000250"/>
    <property type="project" value="UniProtKB"/>
</dbReference>
<dbReference type="GO" id="GO:0030426">
    <property type="term" value="C:growth cone"/>
    <property type="evidence" value="ECO:0000314"/>
    <property type="project" value="UniProtKB"/>
</dbReference>
<dbReference type="GO" id="GO:0016020">
    <property type="term" value="C:membrane"/>
    <property type="evidence" value="ECO:0000250"/>
    <property type="project" value="UniProtKB"/>
</dbReference>
<dbReference type="GO" id="GO:0048471">
    <property type="term" value="C:perinuclear region of cytoplasm"/>
    <property type="evidence" value="ECO:0007669"/>
    <property type="project" value="UniProtKB-SubCell"/>
</dbReference>
<dbReference type="GO" id="GO:0001917">
    <property type="term" value="C:photoreceptor inner segment"/>
    <property type="evidence" value="ECO:0007669"/>
    <property type="project" value="UniProtKB-SubCell"/>
</dbReference>
<dbReference type="GO" id="GO:0005886">
    <property type="term" value="C:plasma membrane"/>
    <property type="evidence" value="ECO:0000314"/>
    <property type="project" value="UniProtKB"/>
</dbReference>
<dbReference type="GO" id="GO:0098793">
    <property type="term" value="C:presynapse"/>
    <property type="evidence" value="ECO:0007669"/>
    <property type="project" value="GOC"/>
</dbReference>
<dbReference type="GO" id="GO:0031201">
    <property type="term" value="C:SNARE complex"/>
    <property type="evidence" value="ECO:0000250"/>
    <property type="project" value="UniProtKB"/>
</dbReference>
<dbReference type="GO" id="GO:0070032">
    <property type="term" value="C:synaptobrevin 2-SNAP-25-syntaxin-1a-complexin I complex"/>
    <property type="evidence" value="ECO:0000318"/>
    <property type="project" value="GO_Central"/>
</dbReference>
<dbReference type="GO" id="GO:0005484">
    <property type="term" value="F:SNAP receptor activity"/>
    <property type="evidence" value="ECO:0000318"/>
    <property type="project" value="GO_Central"/>
</dbReference>
<dbReference type="GO" id="GO:0017075">
    <property type="term" value="F:syntaxin-1 binding"/>
    <property type="evidence" value="ECO:0000318"/>
    <property type="project" value="GO_Central"/>
</dbReference>
<dbReference type="GO" id="GO:0005249">
    <property type="term" value="F:voltage-gated potassium channel activity"/>
    <property type="evidence" value="ECO:0007669"/>
    <property type="project" value="InterPro"/>
</dbReference>
<dbReference type="GO" id="GO:0006887">
    <property type="term" value="P:exocytosis"/>
    <property type="evidence" value="ECO:0000318"/>
    <property type="project" value="GO_Central"/>
</dbReference>
<dbReference type="GO" id="GO:0031629">
    <property type="term" value="P:synaptic vesicle fusion to presynaptic active zone membrane"/>
    <property type="evidence" value="ECO:0000318"/>
    <property type="project" value="GO_Central"/>
</dbReference>
<dbReference type="GO" id="GO:0016082">
    <property type="term" value="P:synaptic vesicle priming"/>
    <property type="evidence" value="ECO:0000318"/>
    <property type="project" value="GO_Central"/>
</dbReference>
<dbReference type="CDD" id="cd15885">
    <property type="entry name" value="SNARE_SNAP25C"/>
    <property type="match status" value="1"/>
</dbReference>
<dbReference type="CDD" id="cd15894">
    <property type="entry name" value="SNARE_SNAP25N"/>
    <property type="match status" value="1"/>
</dbReference>
<dbReference type="FunFam" id="1.20.5.110:FF:000007">
    <property type="entry name" value="Synaptosomal-associated protein"/>
    <property type="match status" value="1"/>
</dbReference>
<dbReference type="FunFam" id="1.20.5.110:FF:000009">
    <property type="entry name" value="Synaptosomal-associated protein"/>
    <property type="match status" value="1"/>
</dbReference>
<dbReference type="Gene3D" id="1.20.5.110">
    <property type="match status" value="2"/>
</dbReference>
<dbReference type="InterPro" id="IPR000928">
    <property type="entry name" value="SNAP-25_dom"/>
</dbReference>
<dbReference type="InterPro" id="IPR039077">
    <property type="entry name" value="SNAP-25_N_SNARE_chord"/>
</dbReference>
<dbReference type="InterPro" id="IPR000727">
    <property type="entry name" value="T_SNARE_dom"/>
</dbReference>
<dbReference type="PANTHER" id="PTHR19305">
    <property type="entry name" value="SYNAPTOSOMAL ASSOCIATED PROTEIN"/>
    <property type="match status" value="1"/>
</dbReference>
<dbReference type="PANTHER" id="PTHR19305:SF5">
    <property type="entry name" value="SYNAPTOSOMAL-ASSOCIATED PROTEIN 25"/>
    <property type="match status" value="1"/>
</dbReference>
<dbReference type="Pfam" id="PF00835">
    <property type="entry name" value="SNAP-25"/>
    <property type="match status" value="1"/>
</dbReference>
<dbReference type="SMART" id="SM00397">
    <property type="entry name" value="t_SNARE"/>
    <property type="match status" value="2"/>
</dbReference>
<dbReference type="SUPFAM" id="SSF58038">
    <property type="entry name" value="SNARE fusion complex"/>
    <property type="match status" value="2"/>
</dbReference>
<dbReference type="PROSITE" id="PS50192">
    <property type="entry name" value="T_SNARE"/>
    <property type="match status" value="2"/>
</dbReference>
<comment type="function">
    <text evidence="1 4">t-SNARE involved in the molecular regulation of neurotransmitter release. May play an important role in the synaptic function of specific neuronal systems. Associates with proteins involved in vesicle docking and membrane fusion. Regulates plasma membrane recycling through its interaction with CENPF. Modulates the gating characteristics of the delayed rectifier voltage-dependent potassium channel KCNB1 in pancreatic beta cells (By similarity).</text>
</comment>
<comment type="subunit">
    <text evidence="2 4 7">Part of the SNARE core complex containing SNAP25, VAMP2 and STX1A; this complex constitutes the basic catalytic machinery of the complex neurotransmitter release apparatus (By similarity). Recruited to the SNARE complex following binding of the SNARE complex component STX1A to STXBP1 (By similarity). This complex binds CPLX1 (By similarity). Found in a complex containing SYT1, SV2B and syntaxin-1 (By similarity). Found in a ternary complex with STX1A and VAMP8 (By similarity). Interacts with HSC70 and with SYT9, forming a complex with DNAJC5 (By similarity). The interaction with SYT9 is inhibited in presence of calcium (By similarity). Isoform 1 and isoform 2 interact with BLOC1S6 (PubMed:19546860). Interacts with CENPF (By similarity). Interacts with EQTN (By similarity). Interacts with HGS (By similarity). Interacts with KCNB1 (via N-terminus); reduces the voltage-dependent potassium channel KCNB1 activity in pancreatic beta cells (By similarity). Interacts with OTOF (By similarity). Interacts with RIMS1 (By similarity). Interacts with SNAPIN (By similarity). Interacts with STXBP6 (By similarity). Interacts with TRIM9 (By similarity). Interacts with ZDHHC13 (via ANK repeats) (By similarity). Interacts with ZDHHC17 (via ANK repeats) (By similarity). Associates with the BLOC-1 complex (PubMed:19546860). Interacts with PLCL1 (via C2 domain) (By similarity). Interacts with PRRT2; this interaction may impair the formation of the SNARE complex (By similarity). Interacts with alpha-synuclein/SNCA (By similarity). Interacts with PRPH2 (By similarity). Interacts with ROM1 (By similarity). Interacts with STX3 (By similarity).</text>
</comment>
<comment type="interaction">
    <interactant intactId="EBI-7336080">
        <id>Q17QQ3</id>
    </interactant>
    <interactant intactId="EBI-7335973">
        <id>P61763</id>
        <label>STXBP1</label>
    </interactant>
    <organismsDiffer>false</organismsDiffer>
    <experiments>3</experiments>
</comment>
<comment type="subcellular location">
    <subcellularLocation>
        <location evidence="2">Cytoplasm</location>
        <location evidence="2">Perinuclear region</location>
    </subcellularLocation>
    <subcellularLocation>
        <location evidence="4">Cell membrane</location>
        <topology evidence="2">Lipid-anchor</topology>
    </subcellularLocation>
    <subcellularLocation>
        <location evidence="2">Synapse</location>
        <location evidence="2">Synaptosome</location>
    </subcellularLocation>
    <subcellularLocation>
        <location evidence="2">Photoreceptor inner segment</location>
    </subcellularLocation>
    <text evidence="2 4">Membrane association requires palmitoylation. Expressed throughout cytoplasm, concentrating at the perinuclear region. Colocalizes with KCNB1 at the cell membrane (By similarity). Colocalizes with PLCL1 at the cell membrane (By similarity).</text>
</comment>
<comment type="PTM">
    <text evidence="2">Palmitoylated. Cys-85 appears to be the main site, and palmitoylation is required for membrane association (By similarity).</text>
</comment>
<comment type="PTM">
    <text evidence="9">(Microbial infection) Targeted and hydrolyzed by C.botulinum neurotoxin BoNT/C; cleavage by BoNT/C inhibits neurotransmitter release (PubMed:8611567). BoNT/C probably hydrolyzes the 198-Arg-|-Ala-199 bond.</text>
</comment>
<comment type="similarity">
    <text evidence="8">Belongs to the SNAP-25 family.</text>
</comment>
<organism>
    <name type="scientific">Bos taurus</name>
    <name type="common">Bovine</name>
    <dbReference type="NCBI Taxonomy" id="9913"/>
    <lineage>
        <taxon>Eukaryota</taxon>
        <taxon>Metazoa</taxon>
        <taxon>Chordata</taxon>
        <taxon>Craniata</taxon>
        <taxon>Vertebrata</taxon>
        <taxon>Euteleostomi</taxon>
        <taxon>Mammalia</taxon>
        <taxon>Eutheria</taxon>
        <taxon>Laurasiatheria</taxon>
        <taxon>Artiodactyla</taxon>
        <taxon>Ruminantia</taxon>
        <taxon>Pecora</taxon>
        <taxon>Bovidae</taxon>
        <taxon>Bovinae</taxon>
        <taxon>Bos</taxon>
    </lineage>
</organism>